<proteinExistence type="evidence at protein level"/>
<sequence>MPGKHQQFQDPEVGCCGKYFLFGFNIVFWVLGALFLAIGLWAWGEKGVLSNISALTDLGGLDPVWLFVVVGGVMSVLGFAGCIGALRENTFLLKFFSVFLGLIFFLELAAGILAFVFKDWIRDQLNLFINNNVKAYRDDLDLQNLIDFAQEYWSCCGARGPNDWNLNIYFNCTDLNPSRERCGVPFSCCVRDPAEDVLNTQCGYDIRLKLELEQEGSIYTKGCVGQFEKWLQDNLIVVAGVLVGIALLQIFGLCLAQNLVSDIKAVKANW</sequence>
<comment type="function">
    <text evidence="2 4 5">Part of TspanC8 subgroup, composed of 6 members that interact with the transmembrane metalloprotease ADAM10. This interaction is required for ADAM10 exit from the endoplasmic reticulum and for enzymatic maturation and trafficking to the cell surface as well as substrate specificity. Different TspanC8/ADAM10 complexes have distinct substrates (PubMed:23035126, PubMed:26668317). Seems to regulate VE-cadherin expression in endothelial cells probably through interaction with ADAM10, promoting leukocyte transmigration (By similarity).</text>
</comment>
<comment type="subunit">
    <text evidence="4 5">Interacts with ADAM10; the interaction influences ADAM10 substrate specificity, endocytosis and turnover.</text>
</comment>
<comment type="subcellular location">
    <subcellularLocation>
        <location evidence="7">Cell membrane</location>
        <topology evidence="3">Multi-pass membrane protein</topology>
    </subcellularLocation>
</comment>
<comment type="similarity">
    <text evidence="6">Belongs to the tetraspanin (TM4SF) family.</text>
</comment>
<accession>Q9D7W4</accession>
<accession>Q91VI6</accession>
<keyword id="KW-1003">Cell membrane</keyword>
<keyword id="KW-1015">Disulfide bond</keyword>
<keyword id="KW-0325">Glycoprotein</keyword>
<keyword id="KW-0472">Membrane</keyword>
<keyword id="KW-1185">Reference proteome</keyword>
<keyword id="KW-0812">Transmembrane</keyword>
<keyword id="KW-1133">Transmembrane helix</keyword>
<feature type="chain" id="PRO_0000219266" description="Tetraspanin-17">
    <location>
        <begin position="1"/>
        <end position="270"/>
    </location>
</feature>
<feature type="topological domain" description="Cytoplasmic" evidence="3">
    <location>
        <begin position="1"/>
        <end position="19"/>
    </location>
</feature>
<feature type="transmembrane region" description="Helical" evidence="3">
    <location>
        <begin position="20"/>
        <end position="40"/>
    </location>
</feature>
<feature type="topological domain" description="Extracellular" evidence="3">
    <location>
        <begin position="41"/>
        <end position="63"/>
    </location>
</feature>
<feature type="transmembrane region" description="Helical" evidence="3">
    <location>
        <begin position="64"/>
        <end position="84"/>
    </location>
</feature>
<feature type="topological domain" description="Cytoplasmic" evidence="3">
    <location>
        <begin position="85"/>
        <end position="94"/>
    </location>
</feature>
<feature type="transmembrane region" description="Helical" evidence="3">
    <location>
        <begin position="95"/>
        <end position="115"/>
    </location>
</feature>
<feature type="topological domain" description="Extracellular" evidence="3">
    <location>
        <begin position="116"/>
        <end position="234"/>
    </location>
</feature>
<feature type="transmembrane region" description="Helical" evidence="3">
    <location>
        <begin position="235"/>
        <end position="255"/>
    </location>
</feature>
<feature type="topological domain" description="Cytoplasmic" evidence="3">
    <location>
        <begin position="256"/>
        <end position="270"/>
    </location>
</feature>
<feature type="glycosylation site" description="N-linked (GlcNAc...) asparagine" evidence="3">
    <location>
        <position position="51"/>
    </location>
</feature>
<feature type="glycosylation site" description="N-linked (GlcNAc...) asparagine" evidence="3">
    <location>
        <position position="171"/>
    </location>
</feature>
<feature type="disulfide bond" evidence="1">
    <location>
        <begin position="155"/>
        <end position="223"/>
    </location>
</feature>
<feature type="disulfide bond" evidence="1">
    <location>
        <begin position="156"/>
        <end position="188"/>
    </location>
</feature>
<feature type="disulfide bond" evidence="1">
    <location>
        <begin position="172"/>
        <end position="182"/>
    </location>
</feature>
<feature type="disulfide bond" evidence="1">
    <location>
        <begin position="189"/>
        <end position="202"/>
    </location>
</feature>
<feature type="sequence conflict" description="In Ref. 2; AAH10346." evidence="6" ref="2">
    <original>E</original>
    <variation>Q</variation>
    <location>
        <position position="215"/>
    </location>
</feature>
<dbReference type="EMBL" id="AK008761">
    <property type="protein sequence ID" value="BAB25880.1"/>
    <property type="molecule type" value="mRNA"/>
</dbReference>
<dbReference type="EMBL" id="BC010346">
    <property type="protein sequence ID" value="AAH10346.1"/>
    <property type="molecule type" value="mRNA"/>
</dbReference>
<dbReference type="CCDS" id="CCDS26536.1"/>
<dbReference type="RefSeq" id="NP_083117.2">
    <property type="nucleotide sequence ID" value="NM_028841.3"/>
</dbReference>
<dbReference type="SMR" id="Q9D7W4"/>
<dbReference type="FunCoup" id="Q9D7W4">
    <property type="interactions" value="199"/>
</dbReference>
<dbReference type="STRING" id="10090.ENSMUSP00000026993"/>
<dbReference type="GlyCosmos" id="Q9D7W4">
    <property type="glycosylation" value="2 sites, No reported glycans"/>
</dbReference>
<dbReference type="GlyGen" id="Q9D7W4">
    <property type="glycosylation" value="2 sites"/>
</dbReference>
<dbReference type="PaxDb" id="10090-ENSMUSP00000026993"/>
<dbReference type="DNASU" id="74257"/>
<dbReference type="GeneID" id="74257"/>
<dbReference type="KEGG" id="mmu:74257"/>
<dbReference type="AGR" id="MGI:1921507"/>
<dbReference type="CTD" id="26262"/>
<dbReference type="MGI" id="MGI:1921507">
    <property type="gene designation" value="Tspan17"/>
</dbReference>
<dbReference type="eggNOG" id="KOG3882">
    <property type="taxonomic scope" value="Eukaryota"/>
</dbReference>
<dbReference type="InParanoid" id="Q9D7W4"/>
<dbReference type="PhylomeDB" id="Q9D7W4"/>
<dbReference type="BioGRID-ORCS" id="74257">
    <property type="hits" value="1 hit in 77 CRISPR screens"/>
</dbReference>
<dbReference type="ChiTaRS" id="Tspan17">
    <property type="organism name" value="mouse"/>
</dbReference>
<dbReference type="PRO" id="PR:Q9D7W4"/>
<dbReference type="Proteomes" id="UP000000589">
    <property type="component" value="Unplaced"/>
</dbReference>
<dbReference type="RNAct" id="Q9D7W4">
    <property type="molecule type" value="protein"/>
</dbReference>
<dbReference type="GO" id="GO:0005886">
    <property type="term" value="C:plasma membrane"/>
    <property type="evidence" value="ECO:0007669"/>
    <property type="project" value="UniProtKB-SubCell"/>
</dbReference>
<dbReference type="GO" id="GO:0019899">
    <property type="term" value="F:enzyme binding"/>
    <property type="evidence" value="ECO:0000353"/>
    <property type="project" value="UniProtKB"/>
</dbReference>
<dbReference type="GO" id="GO:0051604">
    <property type="term" value="P:protein maturation"/>
    <property type="evidence" value="ECO:0000314"/>
    <property type="project" value="UniProtKB"/>
</dbReference>
<dbReference type="GO" id="GO:0051043">
    <property type="term" value="P:regulation of membrane protein ectodomain proteolysis"/>
    <property type="evidence" value="ECO:0000250"/>
    <property type="project" value="UniProtKB"/>
</dbReference>
<dbReference type="CDD" id="cd03159">
    <property type="entry name" value="TM4SF9_like_LEL"/>
    <property type="match status" value="1"/>
</dbReference>
<dbReference type="FunFam" id="1.10.1450.10:FF:000001">
    <property type="entry name" value="Tetraspanin"/>
    <property type="match status" value="1"/>
</dbReference>
<dbReference type="Gene3D" id="1.10.1450.10">
    <property type="entry name" value="Tetraspanin"/>
    <property type="match status" value="1"/>
</dbReference>
<dbReference type="InterPro" id="IPR018499">
    <property type="entry name" value="Tetraspanin/Peripherin"/>
</dbReference>
<dbReference type="InterPro" id="IPR000301">
    <property type="entry name" value="Tetraspanin_animals"/>
</dbReference>
<dbReference type="InterPro" id="IPR018503">
    <property type="entry name" value="Tetraspanin_CS"/>
</dbReference>
<dbReference type="InterPro" id="IPR008952">
    <property type="entry name" value="Tetraspanin_EC2_sf"/>
</dbReference>
<dbReference type="PANTHER" id="PTHR19282">
    <property type="entry name" value="TETRASPANIN"/>
    <property type="match status" value="1"/>
</dbReference>
<dbReference type="PANTHER" id="PTHR19282:SF470">
    <property type="entry name" value="TETRASPANIN-17"/>
    <property type="match status" value="1"/>
</dbReference>
<dbReference type="Pfam" id="PF00335">
    <property type="entry name" value="Tetraspanin"/>
    <property type="match status" value="1"/>
</dbReference>
<dbReference type="PIRSF" id="PIRSF002419">
    <property type="entry name" value="Tetraspanin"/>
    <property type="match status" value="1"/>
</dbReference>
<dbReference type="PRINTS" id="PR00259">
    <property type="entry name" value="TMFOUR"/>
</dbReference>
<dbReference type="SUPFAM" id="SSF48652">
    <property type="entry name" value="Tetraspanin"/>
    <property type="match status" value="1"/>
</dbReference>
<dbReference type="PROSITE" id="PS00421">
    <property type="entry name" value="TM4_1"/>
    <property type="match status" value="1"/>
</dbReference>
<organism>
    <name type="scientific">Mus musculus</name>
    <name type="common">Mouse</name>
    <dbReference type="NCBI Taxonomy" id="10090"/>
    <lineage>
        <taxon>Eukaryota</taxon>
        <taxon>Metazoa</taxon>
        <taxon>Chordata</taxon>
        <taxon>Craniata</taxon>
        <taxon>Vertebrata</taxon>
        <taxon>Euteleostomi</taxon>
        <taxon>Mammalia</taxon>
        <taxon>Eutheria</taxon>
        <taxon>Euarchontoglires</taxon>
        <taxon>Glires</taxon>
        <taxon>Rodentia</taxon>
        <taxon>Myomorpha</taxon>
        <taxon>Muroidea</taxon>
        <taxon>Muridae</taxon>
        <taxon>Murinae</taxon>
        <taxon>Mus</taxon>
        <taxon>Mus</taxon>
    </lineage>
</organism>
<gene>
    <name type="primary">Tspan17</name>
    <name type="synonym">Fbxo23</name>
    <name type="synonym">Tm4sf17</name>
</gene>
<evidence type="ECO:0000250" key="1">
    <source>
        <dbReference type="UniProtKB" id="O95858"/>
    </source>
</evidence>
<evidence type="ECO:0000250" key="2">
    <source>
        <dbReference type="UniProtKB" id="Q96FV3"/>
    </source>
</evidence>
<evidence type="ECO:0000255" key="3"/>
<evidence type="ECO:0000269" key="4">
    <source>
    </source>
</evidence>
<evidence type="ECO:0000269" key="5">
    <source>
    </source>
</evidence>
<evidence type="ECO:0000305" key="6"/>
<evidence type="ECO:0000305" key="7">
    <source>
    </source>
</evidence>
<name>TSN17_MOUSE</name>
<protein>
    <recommendedName>
        <fullName>Tetraspanin-17</fullName>
        <shortName>Tspan-17</shortName>
    </recommendedName>
    <alternativeName>
        <fullName>F-box only protein 23</fullName>
    </alternativeName>
    <alternativeName>
        <fullName>Tetraspan protein SB134</fullName>
    </alternativeName>
    <alternativeName>
        <fullName>Transmembrane 4 superfamily member 17</fullName>
    </alternativeName>
</protein>
<reference key="1">
    <citation type="journal article" date="2005" name="Science">
        <title>The transcriptional landscape of the mammalian genome.</title>
        <authorList>
            <person name="Carninci P."/>
            <person name="Kasukawa T."/>
            <person name="Katayama S."/>
            <person name="Gough J."/>
            <person name="Frith M.C."/>
            <person name="Maeda N."/>
            <person name="Oyama R."/>
            <person name="Ravasi T."/>
            <person name="Lenhard B."/>
            <person name="Wells C."/>
            <person name="Kodzius R."/>
            <person name="Shimokawa K."/>
            <person name="Bajic V.B."/>
            <person name="Brenner S.E."/>
            <person name="Batalov S."/>
            <person name="Forrest A.R."/>
            <person name="Zavolan M."/>
            <person name="Davis M.J."/>
            <person name="Wilming L.G."/>
            <person name="Aidinis V."/>
            <person name="Allen J.E."/>
            <person name="Ambesi-Impiombato A."/>
            <person name="Apweiler R."/>
            <person name="Aturaliya R.N."/>
            <person name="Bailey T.L."/>
            <person name="Bansal M."/>
            <person name="Baxter L."/>
            <person name="Beisel K.W."/>
            <person name="Bersano T."/>
            <person name="Bono H."/>
            <person name="Chalk A.M."/>
            <person name="Chiu K.P."/>
            <person name="Choudhary V."/>
            <person name="Christoffels A."/>
            <person name="Clutterbuck D.R."/>
            <person name="Crowe M.L."/>
            <person name="Dalla E."/>
            <person name="Dalrymple B.P."/>
            <person name="de Bono B."/>
            <person name="Della Gatta G."/>
            <person name="di Bernardo D."/>
            <person name="Down T."/>
            <person name="Engstrom P."/>
            <person name="Fagiolini M."/>
            <person name="Faulkner G."/>
            <person name="Fletcher C.F."/>
            <person name="Fukushima T."/>
            <person name="Furuno M."/>
            <person name="Futaki S."/>
            <person name="Gariboldi M."/>
            <person name="Georgii-Hemming P."/>
            <person name="Gingeras T.R."/>
            <person name="Gojobori T."/>
            <person name="Green R.E."/>
            <person name="Gustincich S."/>
            <person name="Harbers M."/>
            <person name="Hayashi Y."/>
            <person name="Hensch T.K."/>
            <person name="Hirokawa N."/>
            <person name="Hill D."/>
            <person name="Huminiecki L."/>
            <person name="Iacono M."/>
            <person name="Ikeo K."/>
            <person name="Iwama A."/>
            <person name="Ishikawa T."/>
            <person name="Jakt M."/>
            <person name="Kanapin A."/>
            <person name="Katoh M."/>
            <person name="Kawasawa Y."/>
            <person name="Kelso J."/>
            <person name="Kitamura H."/>
            <person name="Kitano H."/>
            <person name="Kollias G."/>
            <person name="Krishnan S.P."/>
            <person name="Kruger A."/>
            <person name="Kummerfeld S.K."/>
            <person name="Kurochkin I.V."/>
            <person name="Lareau L.F."/>
            <person name="Lazarevic D."/>
            <person name="Lipovich L."/>
            <person name="Liu J."/>
            <person name="Liuni S."/>
            <person name="McWilliam S."/>
            <person name="Madan Babu M."/>
            <person name="Madera M."/>
            <person name="Marchionni L."/>
            <person name="Matsuda H."/>
            <person name="Matsuzawa S."/>
            <person name="Miki H."/>
            <person name="Mignone F."/>
            <person name="Miyake S."/>
            <person name="Morris K."/>
            <person name="Mottagui-Tabar S."/>
            <person name="Mulder N."/>
            <person name="Nakano N."/>
            <person name="Nakauchi H."/>
            <person name="Ng P."/>
            <person name="Nilsson R."/>
            <person name="Nishiguchi S."/>
            <person name="Nishikawa S."/>
            <person name="Nori F."/>
            <person name="Ohara O."/>
            <person name="Okazaki Y."/>
            <person name="Orlando V."/>
            <person name="Pang K.C."/>
            <person name="Pavan W.J."/>
            <person name="Pavesi G."/>
            <person name="Pesole G."/>
            <person name="Petrovsky N."/>
            <person name="Piazza S."/>
            <person name="Reed J."/>
            <person name="Reid J.F."/>
            <person name="Ring B.Z."/>
            <person name="Ringwald M."/>
            <person name="Rost B."/>
            <person name="Ruan Y."/>
            <person name="Salzberg S.L."/>
            <person name="Sandelin A."/>
            <person name="Schneider C."/>
            <person name="Schoenbach C."/>
            <person name="Sekiguchi K."/>
            <person name="Semple C.A."/>
            <person name="Seno S."/>
            <person name="Sessa L."/>
            <person name="Sheng Y."/>
            <person name="Shibata Y."/>
            <person name="Shimada H."/>
            <person name="Shimada K."/>
            <person name="Silva D."/>
            <person name="Sinclair B."/>
            <person name="Sperling S."/>
            <person name="Stupka E."/>
            <person name="Sugiura K."/>
            <person name="Sultana R."/>
            <person name="Takenaka Y."/>
            <person name="Taki K."/>
            <person name="Tammoja K."/>
            <person name="Tan S.L."/>
            <person name="Tang S."/>
            <person name="Taylor M.S."/>
            <person name="Tegner J."/>
            <person name="Teichmann S.A."/>
            <person name="Ueda H.R."/>
            <person name="van Nimwegen E."/>
            <person name="Verardo R."/>
            <person name="Wei C.L."/>
            <person name="Yagi K."/>
            <person name="Yamanishi H."/>
            <person name="Zabarovsky E."/>
            <person name="Zhu S."/>
            <person name="Zimmer A."/>
            <person name="Hide W."/>
            <person name="Bult C."/>
            <person name="Grimmond S.M."/>
            <person name="Teasdale R.D."/>
            <person name="Liu E.T."/>
            <person name="Brusic V."/>
            <person name="Quackenbush J."/>
            <person name="Wahlestedt C."/>
            <person name="Mattick J.S."/>
            <person name="Hume D.A."/>
            <person name="Kai C."/>
            <person name="Sasaki D."/>
            <person name="Tomaru Y."/>
            <person name="Fukuda S."/>
            <person name="Kanamori-Katayama M."/>
            <person name="Suzuki M."/>
            <person name="Aoki J."/>
            <person name="Arakawa T."/>
            <person name="Iida J."/>
            <person name="Imamura K."/>
            <person name="Itoh M."/>
            <person name="Kato T."/>
            <person name="Kawaji H."/>
            <person name="Kawagashira N."/>
            <person name="Kawashima T."/>
            <person name="Kojima M."/>
            <person name="Kondo S."/>
            <person name="Konno H."/>
            <person name="Nakano K."/>
            <person name="Ninomiya N."/>
            <person name="Nishio T."/>
            <person name="Okada M."/>
            <person name="Plessy C."/>
            <person name="Shibata K."/>
            <person name="Shiraki T."/>
            <person name="Suzuki S."/>
            <person name="Tagami M."/>
            <person name="Waki K."/>
            <person name="Watahiki A."/>
            <person name="Okamura-Oho Y."/>
            <person name="Suzuki H."/>
            <person name="Kawai J."/>
            <person name="Hayashizaki Y."/>
        </authorList>
    </citation>
    <scope>NUCLEOTIDE SEQUENCE [LARGE SCALE MRNA]</scope>
    <source>
        <strain>C57BL/6J</strain>
        <tissue>Stomach</tissue>
    </source>
</reference>
<reference key="2">
    <citation type="journal article" date="2004" name="Genome Res.">
        <title>The status, quality, and expansion of the NIH full-length cDNA project: the Mammalian Gene Collection (MGC).</title>
        <authorList>
            <consortium name="The MGC Project Team"/>
        </authorList>
    </citation>
    <scope>NUCLEOTIDE SEQUENCE [LARGE SCALE MRNA]</scope>
    <source>
        <tissue>Mammary tumor</tissue>
    </source>
</reference>
<reference key="3">
    <citation type="journal article" date="2012" name="J. Biol. Chem.">
        <title>The TspanC8 subgroup of tetraspanins interacts with A disintegrin and metalloprotease 10 (ADAM10) and regulates its maturation and cell surface expression.</title>
        <authorList>
            <person name="Haining E.J."/>
            <person name="Yang J."/>
            <person name="Bailey R.L."/>
            <person name="Khan K."/>
            <person name="Collier R."/>
            <person name="Tsai S."/>
            <person name="Watson S.P."/>
            <person name="Frampton J."/>
            <person name="Garcia P."/>
            <person name="Tomlinson M.G."/>
        </authorList>
    </citation>
    <scope>FUNCTION</scope>
    <scope>INTERACTION WITH ADAM10</scope>
</reference>
<reference key="4">
    <citation type="journal article" date="2016" name="J. Biol. Chem.">
        <title>TspanC8 tetraspanins and A disintegrin and metalloprotease 10 (ADAM10) interact via their extracellular regions: evidence for distinct binding mechanisms for different TspanC8 proteins.</title>
        <authorList>
            <person name="Noy P.J."/>
            <person name="Yang J."/>
            <person name="Reyat J.S."/>
            <person name="Matthews A.L."/>
            <person name="Charlton A.E."/>
            <person name="Furmston J."/>
            <person name="Rogers D.A."/>
            <person name="Rainger G.E."/>
            <person name="Tomlinson M.G."/>
        </authorList>
    </citation>
    <scope>INTERACTION WITH ADAM10</scope>
    <scope>FUNCTION</scope>
    <scope>SUBCELLULAR LOCATION</scope>
</reference>